<dbReference type="EC" id="4.2.1.20" evidence="1"/>
<dbReference type="EMBL" id="CP000937">
    <property type="protein sequence ID" value="ABZ87091.1"/>
    <property type="molecule type" value="Genomic_DNA"/>
</dbReference>
<dbReference type="SMR" id="B0TWI3"/>
<dbReference type="KEGG" id="fph:Fphi_0868"/>
<dbReference type="eggNOG" id="COG0133">
    <property type="taxonomic scope" value="Bacteria"/>
</dbReference>
<dbReference type="HOGENOM" id="CLU_016734_3_1_6"/>
<dbReference type="UniPathway" id="UPA00035">
    <property type="reaction ID" value="UER00044"/>
</dbReference>
<dbReference type="GO" id="GO:0005737">
    <property type="term" value="C:cytoplasm"/>
    <property type="evidence" value="ECO:0007669"/>
    <property type="project" value="TreeGrafter"/>
</dbReference>
<dbReference type="GO" id="GO:0004834">
    <property type="term" value="F:tryptophan synthase activity"/>
    <property type="evidence" value="ECO:0007669"/>
    <property type="project" value="UniProtKB-UniRule"/>
</dbReference>
<dbReference type="CDD" id="cd06446">
    <property type="entry name" value="Trp-synth_B"/>
    <property type="match status" value="1"/>
</dbReference>
<dbReference type="FunFam" id="3.40.50.1100:FF:000001">
    <property type="entry name" value="Tryptophan synthase beta chain"/>
    <property type="match status" value="1"/>
</dbReference>
<dbReference type="FunFam" id="3.40.50.1100:FF:000004">
    <property type="entry name" value="Tryptophan synthase beta chain"/>
    <property type="match status" value="1"/>
</dbReference>
<dbReference type="Gene3D" id="3.40.50.1100">
    <property type="match status" value="2"/>
</dbReference>
<dbReference type="HAMAP" id="MF_00133">
    <property type="entry name" value="Trp_synth_beta"/>
    <property type="match status" value="1"/>
</dbReference>
<dbReference type="InterPro" id="IPR006653">
    <property type="entry name" value="Trp_synth_b_CS"/>
</dbReference>
<dbReference type="InterPro" id="IPR006654">
    <property type="entry name" value="Trp_synth_beta"/>
</dbReference>
<dbReference type="InterPro" id="IPR023026">
    <property type="entry name" value="Trp_synth_beta/beta-like"/>
</dbReference>
<dbReference type="InterPro" id="IPR001926">
    <property type="entry name" value="TrpB-like_PALP"/>
</dbReference>
<dbReference type="InterPro" id="IPR036052">
    <property type="entry name" value="TrpB-like_PALP_sf"/>
</dbReference>
<dbReference type="NCBIfam" id="TIGR00263">
    <property type="entry name" value="trpB"/>
    <property type="match status" value="1"/>
</dbReference>
<dbReference type="PANTHER" id="PTHR48077:SF3">
    <property type="entry name" value="TRYPTOPHAN SYNTHASE"/>
    <property type="match status" value="1"/>
</dbReference>
<dbReference type="PANTHER" id="PTHR48077">
    <property type="entry name" value="TRYPTOPHAN SYNTHASE-RELATED"/>
    <property type="match status" value="1"/>
</dbReference>
<dbReference type="Pfam" id="PF00291">
    <property type="entry name" value="PALP"/>
    <property type="match status" value="1"/>
</dbReference>
<dbReference type="PIRSF" id="PIRSF001413">
    <property type="entry name" value="Trp_syn_beta"/>
    <property type="match status" value="1"/>
</dbReference>
<dbReference type="SUPFAM" id="SSF53686">
    <property type="entry name" value="Tryptophan synthase beta subunit-like PLP-dependent enzymes"/>
    <property type="match status" value="1"/>
</dbReference>
<dbReference type="PROSITE" id="PS00168">
    <property type="entry name" value="TRP_SYNTHASE_BETA"/>
    <property type="match status" value="1"/>
</dbReference>
<sequence length="396" mass="43030">MSKLNAYFGEYGGQFVPQILVPALDQLEHEFIKAQADESFKQEFKELLQEYAGRPTALTKTRNIVKNTKTKLYLKREDLLHGGAHKTNQVLGQALLAKRMGKKEIIAETGAGQHGVATALACALLDLKCRVYMGAKDVERQSPNVFRMKLMGAEVIPVHSGSATLKDACNEALRDWSANYNKAHYLLGTAAGPHPFPTIVREFQRMIGEETKQQILAKEGKLPDAVIACVGGGSNAIGMFADFIDETSVQLIGVEPAGKGIETGEHGAPLKHGKTGIFFGMKAPLMQNSDGQIEESYSISAGLDFPSVGPQHAHLLAIGRAEYASATDNEALDAFKLLCKKEGIIPALESSHALAYALKLAYENPDKEQLLVVNLSGRGDKDIFTVHDILKEKGEM</sequence>
<organism>
    <name type="scientific">Francisella philomiragia subsp. philomiragia (strain ATCC 25017 / CCUG 19701 / FSC 153 / O#319-036)</name>
    <dbReference type="NCBI Taxonomy" id="484022"/>
    <lineage>
        <taxon>Bacteria</taxon>
        <taxon>Pseudomonadati</taxon>
        <taxon>Pseudomonadota</taxon>
        <taxon>Gammaproteobacteria</taxon>
        <taxon>Thiotrichales</taxon>
        <taxon>Francisellaceae</taxon>
        <taxon>Francisella</taxon>
    </lineage>
</organism>
<keyword id="KW-0028">Amino-acid biosynthesis</keyword>
<keyword id="KW-0057">Aromatic amino acid biosynthesis</keyword>
<keyword id="KW-0456">Lyase</keyword>
<keyword id="KW-0663">Pyridoxal phosphate</keyword>
<keyword id="KW-0822">Tryptophan biosynthesis</keyword>
<evidence type="ECO:0000255" key="1">
    <source>
        <dbReference type="HAMAP-Rule" id="MF_00133"/>
    </source>
</evidence>
<name>TRPB_FRAP2</name>
<protein>
    <recommendedName>
        <fullName evidence="1">Tryptophan synthase beta chain</fullName>
        <ecNumber evidence="1">4.2.1.20</ecNumber>
    </recommendedName>
</protein>
<accession>B0TWI3</accession>
<proteinExistence type="inferred from homology"/>
<reference key="1">
    <citation type="submission" date="2007-12" db="EMBL/GenBank/DDBJ databases">
        <title>Complete sequence of chromosome of Francisella philomiragia subsp. philomiragia ATCC 25017.</title>
        <authorList>
            <consortium name="US DOE Joint Genome Institute"/>
            <person name="Copeland A."/>
            <person name="Lucas S."/>
            <person name="Lapidus A."/>
            <person name="Barry K."/>
            <person name="Detter J.C."/>
            <person name="Glavina del Rio T."/>
            <person name="Hammon N."/>
            <person name="Israni S."/>
            <person name="Dalin E."/>
            <person name="Tice H."/>
            <person name="Pitluck S."/>
            <person name="Chain P."/>
            <person name="Malfatti S."/>
            <person name="Shin M."/>
            <person name="Vergez L."/>
            <person name="Schmutz J."/>
            <person name="Larimer F."/>
            <person name="Land M."/>
            <person name="Hauser L."/>
            <person name="Richardson P."/>
        </authorList>
    </citation>
    <scope>NUCLEOTIDE SEQUENCE [LARGE SCALE GENOMIC DNA]</scope>
    <source>
        <strain>ATCC 25017 / CCUG 19701 / FSC 153 / O#319-036</strain>
    </source>
</reference>
<gene>
    <name evidence="1" type="primary">trpB</name>
    <name type="ordered locus">Fphi_0868</name>
</gene>
<feature type="chain" id="PRO_1000076387" description="Tryptophan synthase beta chain">
    <location>
        <begin position="1"/>
        <end position="396"/>
    </location>
</feature>
<feature type="modified residue" description="N6-(pyridoxal phosphate)lysine" evidence="1">
    <location>
        <position position="86"/>
    </location>
</feature>
<comment type="function">
    <text evidence="1">The beta subunit is responsible for the synthesis of L-tryptophan from indole and L-serine.</text>
</comment>
<comment type="catalytic activity">
    <reaction evidence="1">
        <text>(1S,2R)-1-C-(indol-3-yl)glycerol 3-phosphate + L-serine = D-glyceraldehyde 3-phosphate + L-tryptophan + H2O</text>
        <dbReference type="Rhea" id="RHEA:10532"/>
        <dbReference type="ChEBI" id="CHEBI:15377"/>
        <dbReference type="ChEBI" id="CHEBI:33384"/>
        <dbReference type="ChEBI" id="CHEBI:57912"/>
        <dbReference type="ChEBI" id="CHEBI:58866"/>
        <dbReference type="ChEBI" id="CHEBI:59776"/>
        <dbReference type="EC" id="4.2.1.20"/>
    </reaction>
</comment>
<comment type="cofactor">
    <cofactor evidence="1">
        <name>pyridoxal 5'-phosphate</name>
        <dbReference type="ChEBI" id="CHEBI:597326"/>
    </cofactor>
</comment>
<comment type="pathway">
    <text evidence="1">Amino-acid biosynthesis; L-tryptophan biosynthesis; L-tryptophan from chorismate: step 5/5.</text>
</comment>
<comment type="subunit">
    <text evidence="1">Tetramer of two alpha and two beta chains.</text>
</comment>
<comment type="similarity">
    <text evidence="1">Belongs to the TrpB family.</text>
</comment>